<proteinExistence type="inferred from homology"/>
<comment type="function">
    <text evidence="1">Catalyzes the conversion of dethiobiotin (DTB) to biotin by the insertion of a sulfur atom into dethiobiotin via a radical-based mechanism.</text>
</comment>
<comment type="catalytic activity">
    <reaction evidence="1">
        <text>(4R,5S)-dethiobiotin + (sulfur carrier)-SH + 2 reduced [2Fe-2S]-[ferredoxin] + 2 S-adenosyl-L-methionine = (sulfur carrier)-H + biotin + 2 5'-deoxyadenosine + 2 L-methionine + 2 oxidized [2Fe-2S]-[ferredoxin]</text>
        <dbReference type="Rhea" id="RHEA:22060"/>
        <dbReference type="Rhea" id="RHEA-COMP:10000"/>
        <dbReference type="Rhea" id="RHEA-COMP:10001"/>
        <dbReference type="Rhea" id="RHEA-COMP:14737"/>
        <dbReference type="Rhea" id="RHEA-COMP:14739"/>
        <dbReference type="ChEBI" id="CHEBI:17319"/>
        <dbReference type="ChEBI" id="CHEBI:29917"/>
        <dbReference type="ChEBI" id="CHEBI:33737"/>
        <dbReference type="ChEBI" id="CHEBI:33738"/>
        <dbReference type="ChEBI" id="CHEBI:57586"/>
        <dbReference type="ChEBI" id="CHEBI:57844"/>
        <dbReference type="ChEBI" id="CHEBI:59789"/>
        <dbReference type="ChEBI" id="CHEBI:64428"/>
        <dbReference type="ChEBI" id="CHEBI:149473"/>
        <dbReference type="EC" id="2.8.1.6"/>
    </reaction>
</comment>
<comment type="cofactor">
    <cofactor evidence="1">
        <name>[4Fe-4S] cluster</name>
        <dbReference type="ChEBI" id="CHEBI:49883"/>
    </cofactor>
    <text evidence="1">Binds 1 [4Fe-4S] cluster. The cluster is coordinated with 3 cysteines and an exchangeable S-adenosyl-L-methionine.</text>
</comment>
<comment type="cofactor">
    <cofactor evidence="1">
        <name>[2Fe-2S] cluster</name>
        <dbReference type="ChEBI" id="CHEBI:190135"/>
    </cofactor>
    <text evidence="1">Binds 1 [2Fe-2S] cluster. The cluster is coordinated with 3 cysteines and 1 arginine.</text>
</comment>
<comment type="pathway">
    <text evidence="1">Cofactor biosynthesis; biotin biosynthesis; biotin from 7,8-diaminononanoate: step 2/2.</text>
</comment>
<comment type="subunit">
    <text evidence="1">Homodimer.</text>
</comment>
<comment type="similarity">
    <text evidence="1">Belongs to the radical SAM superfamily. Biotin synthase family.</text>
</comment>
<keyword id="KW-0001">2Fe-2S</keyword>
<keyword id="KW-0004">4Fe-4S</keyword>
<keyword id="KW-0093">Biotin biosynthesis</keyword>
<keyword id="KW-0408">Iron</keyword>
<keyword id="KW-0411">Iron-sulfur</keyword>
<keyword id="KW-0479">Metal-binding</keyword>
<keyword id="KW-0949">S-adenosyl-L-methionine</keyword>
<keyword id="KW-0808">Transferase</keyword>
<reference key="1">
    <citation type="journal article" date="2002" name="Mol. Microbiol.">
        <title>Genome sequence of Streptococcus agalactiae, a pathogen causing invasive neonatal disease.</title>
        <authorList>
            <person name="Glaser P."/>
            <person name="Rusniok C."/>
            <person name="Buchrieser C."/>
            <person name="Chevalier F."/>
            <person name="Frangeul L."/>
            <person name="Msadek T."/>
            <person name="Zouine M."/>
            <person name="Couve E."/>
            <person name="Lalioui L."/>
            <person name="Poyart C."/>
            <person name="Trieu-Cuot P."/>
            <person name="Kunst F."/>
        </authorList>
    </citation>
    <scope>NUCLEOTIDE SEQUENCE [LARGE SCALE GENOMIC DNA]</scope>
    <source>
        <strain>NEM316</strain>
    </source>
</reference>
<gene>
    <name evidence="1" type="primary">bioB</name>
    <name type="ordered locus">gbs0511</name>
</gene>
<accession>Q8E6Q1</accession>
<organism>
    <name type="scientific">Streptococcus agalactiae serotype III (strain NEM316)</name>
    <dbReference type="NCBI Taxonomy" id="211110"/>
    <lineage>
        <taxon>Bacteria</taxon>
        <taxon>Bacillati</taxon>
        <taxon>Bacillota</taxon>
        <taxon>Bacilli</taxon>
        <taxon>Lactobacillales</taxon>
        <taxon>Streptococcaceae</taxon>
        <taxon>Streptococcus</taxon>
    </lineage>
</organism>
<feature type="chain" id="PRO_0000381661" description="Biotin synthase">
    <location>
        <begin position="1"/>
        <end position="330"/>
    </location>
</feature>
<feature type="domain" description="Radical SAM core" evidence="2">
    <location>
        <begin position="53"/>
        <end position="276"/>
    </location>
</feature>
<feature type="binding site" evidence="1">
    <location>
        <position position="68"/>
    </location>
    <ligand>
        <name>[4Fe-4S] cluster</name>
        <dbReference type="ChEBI" id="CHEBI:49883"/>
        <note>4Fe-4S-S-AdoMet</note>
    </ligand>
</feature>
<feature type="binding site" evidence="1">
    <location>
        <position position="72"/>
    </location>
    <ligand>
        <name>[4Fe-4S] cluster</name>
        <dbReference type="ChEBI" id="CHEBI:49883"/>
        <note>4Fe-4S-S-AdoMet</note>
    </ligand>
</feature>
<feature type="binding site" evidence="1">
    <location>
        <position position="75"/>
    </location>
    <ligand>
        <name>[4Fe-4S] cluster</name>
        <dbReference type="ChEBI" id="CHEBI:49883"/>
        <note>4Fe-4S-S-AdoMet</note>
    </ligand>
</feature>
<feature type="binding site" evidence="1">
    <location>
        <position position="112"/>
    </location>
    <ligand>
        <name>[2Fe-2S] cluster</name>
        <dbReference type="ChEBI" id="CHEBI:190135"/>
    </ligand>
</feature>
<feature type="binding site" evidence="1">
    <location>
        <position position="144"/>
    </location>
    <ligand>
        <name>[2Fe-2S] cluster</name>
        <dbReference type="ChEBI" id="CHEBI:190135"/>
    </ligand>
</feature>
<feature type="binding site" evidence="1">
    <location>
        <position position="204"/>
    </location>
    <ligand>
        <name>[2Fe-2S] cluster</name>
        <dbReference type="ChEBI" id="CHEBI:190135"/>
    </ligand>
</feature>
<feature type="binding site" evidence="1">
    <location>
        <position position="274"/>
    </location>
    <ligand>
        <name>[2Fe-2S] cluster</name>
        <dbReference type="ChEBI" id="CHEBI:190135"/>
    </ligand>
</feature>
<sequence>MSFQTNYIHLADEILSGKTSISYEQALEILNSDENWWEIYAAALYLKNQVSRNNIRLNVLLSAKQGLCAENCGYCSQSKESTADIDKFGLLPQNVILKQAIVAHQNGASVFCIAMSGTKPSKREIEQLCQVIPEIKKSLPLEICLTAGFLDREQLHQLKQAGIDRINHNLNTPEENYPNIATTHSFKDRCDTLERIHNEDIDVCSGFICGMGESDEGLITLAFRLKELNPYSIPVNFLLAVEGTPLGKYNYLTPIKCLKIMAMLRFVFPFKELRLSAGREVHFENFESLVTLLVDSTFLGNYLTEGGRNQHTDIEFLEKLQLNHTKKELI</sequence>
<evidence type="ECO:0000255" key="1">
    <source>
        <dbReference type="HAMAP-Rule" id="MF_01694"/>
    </source>
</evidence>
<evidence type="ECO:0000255" key="2">
    <source>
        <dbReference type="PROSITE-ProRule" id="PRU01266"/>
    </source>
</evidence>
<dbReference type="EC" id="2.8.1.6" evidence="1"/>
<dbReference type="EMBL" id="AL766845">
    <property type="protein sequence ID" value="CAD46155.1"/>
    <property type="molecule type" value="Genomic_DNA"/>
</dbReference>
<dbReference type="RefSeq" id="WP_000009965.1">
    <property type="nucleotide sequence ID" value="NC_004368.1"/>
</dbReference>
<dbReference type="SMR" id="Q8E6Q1"/>
<dbReference type="GeneID" id="66885447"/>
<dbReference type="KEGG" id="san:gbs0511"/>
<dbReference type="eggNOG" id="COG0502">
    <property type="taxonomic scope" value="Bacteria"/>
</dbReference>
<dbReference type="HOGENOM" id="CLU_033172_2_1_9"/>
<dbReference type="UniPathway" id="UPA00078">
    <property type="reaction ID" value="UER00162"/>
</dbReference>
<dbReference type="Proteomes" id="UP000000823">
    <property type="component" value="Chromosome"/>
</dbReference>
<dbReference type="GO" id="GO:0051537">
    <property type="term" value="F:2 iron, 2 sulfur cluster binding"/>
    <property type="evidence" value="ECO:0007669"/>
    <property type="project" value="UniProtKB-KW"/>
</dbReference>
<dbReference type="GO" id="GO:0051539">
    <property type="term" value="F:4 iron, 4 sulfur cluster binding"/>
    <property type="evidence" value="ECO:0007669"/>
    <property type="project" value="UniProtKB-KW"/>
</dbReference>
<dbReference type="GO" id="GO:0004076">
    <property type="term" value="F:biotin synthase activity"/>
    <property type="evidence" value="ECO:0007669"/>
    <property type="project" value="UniProtKB-UniRule"/>
</dbReference>
<dbReference type="GO" id="GO:0005506">
    <property type="term" value="F:iron ion binding"/>
    <property type="evidence" value="ECO:0007669"/>
    <property type="project" value="UniProtKB-UniRule"/>
</dbReference>
<dbReference type="GO" id="GO:0009102">
    <property type="term" value="P:biotin biosynthetic process"/>
    <property type="evidence" value="ECO:0007669"/>
    <property type="project" value="UniProtKB-UniRule"/>
</dbReference>
<dbReference type="CDD" id="cd01335">
    <property type="entry name" value="Radical_SAM"/>
    <property type="match status" value="1"/>
</dbReference>
<dbReference type="Gene3D" id="3.20.20.70">
    <property type="entry name" value="Aldolase class I"/>
    <property type="match status" value="1"/>
</dbReference>
<dbReference type="HAMAP" id="MF_01694">
    <property type="entry name" value="BioB"/>
    <property type="match status" value="1"/>
</dbReference>
<dbReference type="InterPro" id="IPR013785">
    <property type="entry name" value="Aldolase_TIM"/>
</dbReference>
<dbReference type="InterPro" id="IPR010722">
    <property type="entry name" value="BATS_dom"/>
</dbReference>
<dbReference type="InterPro" id="IPR002684">
    <property type="entry name" value="Biotin_synth/BioAB"/>
</dbReference>
<dbReference type="InterPro" id="IPR024177">
    <property type="entry name" value="Biotin_synthase"/>
</dbReference>
<dbReference type="InterPro" id="IPR006638">
    <property type="entry name" value="Elp3/MiaA/NifB-like_rSAM"/>
</dbReference>
<dbReference type="InterPro" id="IPR007197">
    <property type="entry name" value="rSAM"/>
</dbReference>
<dbReference type="NCBIfam" id="TIGR00433">
    <property type="entry name" value="bioB"/>
    <property type="match status" value="1"/>
</dbReference>
<dbReference type="PANTHER" id="PTHR22976">
    <property type="entry name" value="BIOTIN SYNTHASE"/>
    <property type="match status" value="1"/>
</dbReference>
<dbReference type="PANTHER" id="PTHR22976:SF2">
    <property type="entry name" value="BIOTIN SYNTHASE, MITOCHONDRIAL"/>
    <property type="match status" value="1"/>
</dbReference>
<dbReference type="Pfam" id="PF06968">
    <property type="entry name" value="BATS"/>
    <property type="match status" value="1"/>
</dbReference>
<dbReference type="Pfam" id="PF04055">
    <property type="entry name" value="Radical_SAM"/>
    <property type="match status" value="1"/>
</dbReference>
<dbReference type="PIRSF" id="PIRSF001619">
    <property type="entry name" value="Biotin_synth"/>
    <property type="match status" value="1"/>
</dbReference>
<dbReference type="SFLD" id="SFLDG01278">
    <property type="entry name" value="biotin_synthase_like"/>
    <property type="match status" value="1"/>
</dbReference>
<dbReference type="SFLD" id="SFLDS00029">
    <property type="entry name" value="Radical_SAM"/>
    <property type="match status" value="1"/>
</dbReference>
<dbReference type="SMART" id="SM00876">
    <property type="entry name" value="BATS"/>
    <property type="match status" value="1"/>
</dbReference>
<dbReference type="SMART" id="SM00729">
    <property type="entry name" value="Elp3"/>
    <property type="match status" value="1"/>
</dbReference>
<dbReference type="SUPFAM" id="SSF102114">
    <property type="entry name" value="Radical SAM enzymes"/>
    <property type="match status" value="1"/>
</dbReference>
<dbReference type="PROSITE" id="PS51918">
    <property type="entry name" value="RADICAL_SAM"/>
    <property type="match status" value="1"/>
</dbReference>
<protein>
    <recommendedName>
        <fullName evidence="1">Biotin synthase</fullName>
        <ecNumber evidence="1">2.8.1.6</ecNumber>
    </recommendedName>
</protein>
<name>BIOB_STRA3</name>